<feature type="chain" id="PRO_0000161571" description="Carboxymethylenebutenolidase">
    <location>
        <begin position="1"/>
        <end position="236"/>
    </location>
</feature>
<feature type="active site" evidence="2">
    <location>
        <position position="123"/>
    </location>
</feature>
<feature type="active site" evidence="2">
    <location>
        <position position="171"/>
    </location>
</feature>
<feature type="active site" evidence="2">
    <location>
        <position position="202"/>
    </location>
</feature>
<feature type="mutagenesis site" description="Drastically reduced activity." evidence="2">
    <original>C</original>
    <variation>S</variation>
    <location>
        <position position="123"/>
    </location>
</feature>
<feature type="strand" evidence="4">
    <location>
        <begin position="18"/>
        <end position="21"/>
    </location>
</feature>
<feature type="strand" evidence="4">
    <location>
        <begin position="24"/>
        <end position="34"/>
    </location>
</feature>
<feature type="helix" evidence="4">
    <location>
        <begin position="42"/>
        <end position="53"/>
    </location>
</feature>
<feature type="strand" evidence="4">
    <location>
        <begin position="57"/>
        <end position="61"/>
    </location>
</feature>
<feature type="helix" evidence="4">
    <location>
        <begin position="63"/>
        <end position="66"/>
    </location>
</feature>
<feature type="helix" evidence="4">
    <location>
        <begin position="78"/>
        <end position="90"/>
    </location>
</feature>
<feature type="helix" evidence="4">
    <location>
        <begin position="93"/>
        <end position="108"/>
    </location>
</feature>
<feature type="strand" evidence="4">
    <location>
        <begin position="113"/>
        <end position="122"/>
    </location>
</feature>
<feature type="helix" evidence="4">
    <location>
        <begin position="124"/>
        <end position="135"/>
    </location>
</feature>
<feature type="strand" evidence="4">
    <location>
        <begin position="138"/>
        <end position="145"/>
    </location>
</feature>
<feature type="helix" evidence="4">
    <location>
        <begin position="149"/>
        <end position="151"/>
    </location>
</feature>
<feature type="helix" evidence="4">
    <location>
        <begin position="153"/>
        <end position="158"/>
    </location>
</feature>
<feature type="strand" evidence="4">
    <location>
        <begin position="163"/>
        <end position="168"/>
    </location>
</feature>
<feature type="helix" evidence="4">
    <location>
        <begin position="176"/>
        <end position="187"/>
    </location>
</feature>
<feature type="strand" evidence="4">
    <location>
        <begin position="192"/>
        <end position="197"/>
    </location>
</feature>
<feature type="turn" evidence="4">
    <location>
        <begin position="202"/>
        <end position="205"/>
    </location>
</feature>
<feature type="helix" evidence="4">
    <location>
        <begin position="214"/>
        <end position="228"/>
    </location>
</feature>
<feature type="helix" evidence="4">
    <location>
        <begin position="229"/>
        <end position="231"/>
    </location>
</feature>
<dbReference type="EC" id="3.1.1.45"/>
<dbReference type="EMBL" id="M15201">
    <property type="protein sequence ID" value="AAA25770.1"/>
    <property type="molecule type" value="Genomic_DNA"/>
</dbReference>
<dbReference type="EMBL" id="AF019038">
    <property type="protein sequence ID" value="AAB71539.1"/>
    <property type="molecule type" value="Genomic_DNA"/>
</dbReference>
<dbReference type="PIR" id="S02022">
    <property type="entry name" value="S02022"/>
</dbReference>
<dbReference type="PDB" id="1DIN">
    <property type="method" value="X-ray"/>
    <property type="resolution" value="1.80 A"/>
    <property type="chains" value="A=1-236"/>
</dbReference>
<dbReference type="PDB" id="4P93">
    <property type="method" value="X-ray"/>
    <property type="resolution" value="1.85 A"/>
    <property type="chains" value="A/B=1-236"/>
</dbReference>
<dbReference type="PDB" id="4U2B">
    <property type="method" value="X-ray"/>
    <property type="resolution" value="1.70 A"/>
    <property type="chains" value="A=1-236"/>
</dbReference>
<dbReference type="PDB" id="4U2C">
    <property type="method" value="X-ray"/>
    <property type="resolution" value="1.95 A"/>
    <property type="chains" value="A=1-236"/>
</dbReference>
<dbReference type="PDB" id="4U2D">
    <property type="method" value="X-ray"/>
    <property type="resolution" value="1.67 A"/>
    <property type="chains" value="A=1-236"/>
</dbReference>
<dbReference type="PDB" id="4U2E">
    <property type="method" value="X-ray"/>
    <property type="resolution" value="1.70 A"/>
    <property type="chains" value="A=1-236"/>
</dbReference>
<dbReference type="PDB" id="4U2F">
    <property type="method" value="X-ray"/>
    <property type="resolution" value="1.80 A"/>
    <property type="chains" value="A=1-236"/>
</dbReference>
<dbReference type="PDB" id="4U2G">
    <property type="method" value="X-ray"/>
    <property type="resolution" value="1.80 A"/>
    <property type="chains" value="A=1-236"/>
</dbReference>
<dbReference type="PDBsum" id="1DIN"/>
<dbReference type="PDBsum" id="4P93"/>
<dbReference type="PDBsum" id="4U2B"/>
<dbReference type="PDBsum" id="4U2C"/>
<dbReference type="PDBsum" id="4U2D"/>
<dbReference type="PDBsum" id="4U2E"/>
<dbReference type="PDBsum" id="4U2F"/>
<dbReference type="PDBsum" id="4U2G"/>
<dbReference type="SMR" id="P0A115"/>
<dbReference type="STRING" id="1301098.PKB_3276"/>
<dbReference type="DrugBank" id="DB02153">
    <property type="generic name" value="3-sulfino-L-alanine"/>
</dbReference>
<dbReference type="DrugBank" id="DB01973">
    <property type="generic name" value="O-Benzylsulfonyl-Serine"/>
</dbReference>
<dbReference type="ESTHER" id="psepu-clcd1">
    <property type="family name" value="Dienelactone_hydrolase"/>
</dbReference>
<dbReference type="eggNOG" id="COG0412">
    <property type="taxonomic scope" value="Bacteria"/>
</dbReference>
<dbReference type="BioCyc" id="MetaCyc:MONOMER-14382"/>
<dbReference type="BRENDA" id="3.1.1.45">
    <property type="organism ID" value="5180"/>
</dbReference>
<dbReference type="UniPathway" id="UPA00083"/>
<dbReference type="EvolutionaryTrace" id="P0A115"/>
<dbReference type="GO" id="GO:0008806">
    <property type="term" value="F:carboxymethylenebutenolidase activity"/>
    <property type="evidence" value="ECO:0007669"/>
    <property type="project" value="UniProtKB-EC"/>
</dbReference>
<dbReference type="GO" id="GO:0009056">
    <property type="term" value="P:catabolic process"/>
    <property type="evidence" value="ECO:0007669"/>
    <property type="project" value="UniProtKB-KW"/>
</dbReference>
<dbReference type="Gene3D" id="3.40.50.1820">
    <property type="entry name" value="alpha/beta hydrolase"/>
    <property type="match status" value="1"/>
</dbReference>
<dbReference type="InterPro" id="IPR029058">
    <property type="entry name" value="AB_hydrolase_fold"/>
</dbReference>
<dbReference type="InterPro" id="IPR002925">
    <property type="entry name" value="Dienelactn_hydro"/>
</dbReference>
<dbReference type="InterPro" id="IPR051049">
    <property type="entry name" value="Dienelactone_hydrolase-like"/>
</dbReference>
<dbReference type="PANTHER" id="PTHR46623:SF6">
    <property type="entry name" value="ALPHA_BETA-HYDROLASES SUPERFAMILY PROTEIN"/>
    <property type="match status" value="1"/>
</dbReference>
<dbReference type="PANTHER" id="PTHR46623">
    <property type="entry name" value="CARBOXYMETHYLENEBUTENOLIDASE-RELATED"/>
    <property type="match status" value="1"/>
</dbReference>
<dbReference type="Pfam" id="PF01738">
    <property type="entry name" value="DLH"/>
    <property type="match status" value="1"/>
</dbReference>
<dbReference type="SUPFAM" id="SSF53474">
    <property type="entry name" value="alpha/beta-Hydrolases"/>
    <property type="match status" value="1"/>
</dbReference>
<name>CLCD_PSEKB</name>
<comment type="function">
    <text evidence="1">Ring cleavage of cyclic ester dienelactone to produce maleylacetate.</text>
</comment>
<comment type="catalytic activity">
    <reaction evidence="1">
        <text>2-(5-oxo-2,5-dihydrofuran-2-ylidene)acetate + H2O = 4-oxohex-2-enedioate + H(+)</text>
        <dbReference type="Rhea" id="RHEA:12372"/>
        <dbReference type="ChEBI" id="CHEBI:12040"/>
        <dbReference type="ChEBI" id="CHEBI:15377"/>
        <dbReference type="ChEBI" id="CHEBI:15378"/>
        <dbReference type="ChEBI" id="CHEBI:57263"/>
        <dbReference type="EC" id="3.1.1.45"/>
    </reaction>
</comment>
<comment type="pathway">
    <text evidence="1">Aromatic compound metabolism; 3-chlorocatechol degradation.</text>
</comment>
<comment type="subunit">
    <text evidence="1">Monomer.</text>
</comment>
<comment type="miscellaneous">
    <text>Carboxymethylenebutenolidase is specific for dienelactone and has no activity toward enol-lactones.</text>
</comment>
<comment type="similarity">
    <text evidence="3">Belongs to the dienelactone hydrolase family.</text>
</comment>
<geneLocation type="plasmid">
    <name>pB13</name>
</geneLocation>
<sequence>MLTEGISIQSYDGHTFGALVGSPAKAPAPVIVIAQEIFGVNAFMRETVSWLVDQGYAAVCPDLYARQAPGTALDPQDERQREQAYKLWQAFDMEAGVGDLEAAIRYARHQPYSNGKVGLVGYCLGGALAFLVAAKGYVDRAVGYYGVGLEKQLKKVPEVKHPALFHMGGQDHFVPAPSRQLITEGFGANPLLQVHWYEEAGHSFARTSSSGYVASAAALANERRLDFLAPLQSKKP</sequence>
<gene>
    <name type="primary">clcD</name>
</gene>
<proteinExistence type="evidence at protein level"/>
<organism>
    <name type="scientific">Pseudomonas knackmussii (strain DSM 6978 / CCUG 54928 / LMG 23759 / B13)</name>
    <dbReference type="NCBI Taxonomy" id="1301098"/>
    <lineage>
        <taxon>Bacteria</taxon>
        <taxon>Pseudomonadati</taxon>
        <taxon>Pseudomonadota</taxon>
        <taxon>Gammaproteobacteria</taxon>
        <taxon>Pseudomonadales</taxon>
        <taxon>Pseudomonadaceae</taxon>
        <taxon>Pseudomonas</taxon>
    </lineage>
</organism>
<accession>P0A115</accession>
<accession>P11453</accession>
<evidence type="ECO:0000269" key="1">
    <source>
    </source>
</evidence>
<evidence type="ECO:0000269" key="2">
    <source>
    </source>
</evidence>
<evidence type="ECO:0000305" key="3"/>
<evidence type="ECO:0007829" key="4">
    <source>
        <dbReference type="PDB" id="4U2D"/>
    </source>
</evidence>
<reference key="1">
    <citation type="journal article" date="1987" name="J. Bacteriol.">
        <title>Nucleotide sequence and expression of clcD, a plasmid-borne dienelactone hydrolase gene from Pseudomonas sp. strain B13.</title>
        <authorList>
            <person name="Frantz B."/>
            <person name="Ngai K.-L."/>
            <person name="Chatterjee D.K."/>
            <person name="Ornston L.N."/>
            <person name="Chakrabarty A.M."/>
        </authorList>
    </citation>
    <scope>NUCLEOTIDE SEQUENCE [GENOMIC DNA]</scope>
</reference>
<reference key="2">
    <citation type="journal article" date="1997" name="J. Bacteriol.">
        <title>Cloning, characterization, and sequence analysis of the clcE gene encoding the maleylacetate reductase of Pseudomonas sp. strain B13.</title>
        <authorList>
            <person name="Kasberg T."/>
            <person name="Seibert V."/>
            <person name="Schlomann M."/>
            <person name="Reineke W."/>
        </authorList>
    </citation>
    <scope>NUCLEOTIDE SEQUENCE [GENOMIC DNA]</scope>
</reference>
<reference key="3">
    <citation type="journal article" date="1988" name="J. Mol. Biol.">
        <title>X-ray crystallographic structure of dienelactone hydrolase at 2.8 A.</title>
        <authorList>
            <person name="Pathak D."/>
            <person name="Ngai K.L."/>
            <person name="Ollis D."/>
        </authorList>
    </citation>
    <scope>X-RAY CRYSTALLOGRAPHY (2.8 ANGSTROMS)</scope>
    <scope>ACTIVE SITES</scope>
</reference>
<reference key="4">
    <citation type="journal article" date="1990" name="J. Mol. Biol.">
        <title>Refined structure of dienelactone hydrolase at 1.8 A.</title>
        <authorList>
            <person name="Pathak D."/>
            <person name="Ollis D."/>
        </authorList>
    </citation>
    <scope>X-RAY CRYSTALLOGRAPHY (1.8 ANGSTROMS)</scope>
    <scope>FUNCTION</scope>
    <scope>SUBUNIT</scope>
    <scope>PATHWAY</scope>
    <scope>MUTAGENESIS OF CYS-123</scope>
</reference>
<protein>
    <recommendedName>
        <fullName>Carboxymethylenebutenolidase</fullName>
        <ecNumber>3.1.1.45</ecNumber>
    </recommendedName>
    <alternativeName>
        <fullName>Dienelactone hydrolase</fullName>
        <shortName>DLH</shortName>
    </alternativeName>
</protein>
<keyword id="KW-0002">3D-structure</keyword>
<keyword id="KW-0058">Aromatic hydrocarbons catabolism</keyword>
<keyword id="KW-0378">Hydrolase</keyword>
<keyword id="KW-0614">Plasmid</keyword>
<keyword id="KW-0719">Serine esterase</keyword>